<accession>Q42396</accession>
<dbReference type="EC" id="2.7.11.1"/>
<dbReference type="EMBL" id="U20388">
    <property type="protein sequence ID" value="AAA67653.1"/>
    <property type="molecule type" value="mRNA"/>
</dbReference>
<dbReference type="EMBL" id="U20626">
    <property type="protein sequence ID" value="AAA67657.1"/>
    <property type="molecule type" value="Genomic_DNA"/>
</dbReference>
<dbReference type="EMBL" id="AB025633">
    <property type="protein sequence ID" value="BAA97242.1"/>
    <property type="molecule type" value="Genomic_DNA"/>
</dbReference>
<dbReference type="EMBL" id="CP002688">
    <property type="protein sequence ID" value="AED93186.1"/>
    <property type="molecule type" value="Genomic_DNA"/>
</dbReference>
<dbReference type="EMBL" id="AK229078">
    <property type="protein sequence ID" value="BAF00959.1"/>
    <property type="molecule type" value="mRNA"/>
</dbReference>
<dbReference type="EMBL" id="BT026382">
    <property type="protein sequence ID" value="ABH04489.1"/>
    <property type="molecule type" value="mRNA"/>
</dbReference>
<dbReference type="PIR" id="S71776">
    <property type="entry name" value="S71776"/>
</dbReference>
<dbReference type="RefSeq" id="NP_197748.1">
    <property type="nucleotide sequence ID" value="NM_122264.5"/>
</dbReference>
<dbReference type="SMR" id="Q42396"/>
<dbReference type="BioGRID" id="17699">
    <property type="interactions" value="3"/>
</dbReference>
<dbReference type="FunCoup" id="Q42396">
    <property type="interactions" value="1764"/>
</dbReference>
<dbReference type="IntAct" id="Q42396">
    <property type="interactions" value="1"/>
</dbReference>
<dbReference type="MINT" id="Q42396"/>
<dbReference type="STRING" id="3702.Q42396"/>
<dbReference type="PaxDb" id="3702-AT5G23580.1"/>
<dbReference type="ProteomicsDB" id="223949"/>
<dbReference type="EnsemblPlants" id="AT5G23580.1">
    <property type="protein sequence ID" value="AT5G23580.1"/>
    <property type="gene ID" value="AT5G23580"/>
</dbReference>
<dbReference type="GeneID" id="832424"/>
<dbReference type="Gramene" id="AT5G23580.1">
    <property type="protein sequence ID" value="AT5G23580.1"/>
    <property type="gene ID" value="AT5G23580"/>
</dbReference>
<dbReference type="KEGG" id="ath:AT5G23580"/>
<dbReference type="Araport" id="AT5G23580"/>
<dbReference type="TAIR" id="AT5G23580">
    <property type="gene designation" value="CDPK9"/>
</dbReference>
<dbReference type="eggNOG" id="KOG0032">
    <property type="taxonomic scope" value="Eukaryota"/>
</dbReference>
<dbReference type="HOGENOM" id="CLU_000288_37_4_1"/>
<dbReference type="InParanoid" id="Q42396"/>
<dbReference type="OMA" id="EGSINSH"/>
<dbReference type="PhylomeDB" id="Q42396"/>
<dbReference type="PRO" id="PR:Q42396"/>
<dbReference type="Proteomes" id="UP000006548">
    <property type="component" value="Chromosome 5"/>
</dbReference>
<dbReference type="ExpressionAtlas" id="Q42396">
    <property type="expression patterns" value="baseline and differential"/>
</dbReference>
<dbReference type="GO" id="GO:0005524">
    <property type="term" value="F:ATP binding"/>
    <property type="evidence" value="ECO:0007669"/>
    <property type="project" value="UniProtKB-KW"/>
</dbReference>
<dbReference type="GO" id="GO:0005509">
    <property type="term" value="F:calcium ion binding"/>
    <property type="evidence" value="ECO:0007669"/>
    <property type="project" value="InterPro"/>
</dbReference>
<dbReference type="GO" id="GO:0106310">
    <property type="term" value="F:protein serine kinase activity"/>
    <property type="evidence" value="ECO:0007669"/>
    <property type="project" value="RHEA"/>
</dbReference>
<dbReference type="GO" id="GO:0004674">
    <property type="term" value="F:protein serine/threonine kinase activity"/>
    <property type="evidence" value="ECO:0007669"/>
    <property type="project" value="UniProtKB-KW"/>
</dbReference>
<dbReference type="GO" id="GO:0009738">
    <property type="term" value="P:abscisic acid-activated signaling pathway"/>
    <property type="evidence" value="ECO:0000315"/>
    <property type="project" value="TAIR"/>
</dbReference>
<dbReference type="CDD" id="cd00051">
    <property type="entry name" value="EFh"/>
    <property type="match status" value="2"/>
</dbReference>
<dbReference type="CDD" id="cd05117">
    <property type="entry name" value="STKc_CAMK"/>
    <property type="match status" value="1"/>
</dbReference>
<dbReference type="FunFam" id="1.10.238.10:FF:000015">
    <property type="entry name" value="Calcium-dependent protein kinase 1"/>
    <property type="match status" value="1"/>
</dbReference>
<dbReference type="FunFam" id="3.30.200.20:FF:000004">
    <property type="entry name" value="Calcium-dependent protein kinase 1"/>
    <property type="match status" value="1"/>
</dbReference>
<dbReference type="FunFam" id="1.10.510.10:FF:001864">
    <property type="entry name" value="Calcium-dependent protein kinase SK5"/>
    <property type="match status" value="1"/>
</dbReference>
<dbReference type="FunFam" id="1.10.510.10:FF:001294">
    <property type="entry name" value="CDPK-related kinase 3"/>
    <property type="match status" value="1"/>
</dbReference>
<dbReference type="Gene3D" id="1.10.238.10">
    <property type="entry name" value="EF-hand"/>
    <property type="match status" value="1"/>
</dbReference>
<dbReference type="Gene3D" id="3.30.200.20">
    <property type="entry name" value="Phosphorylase Kinase, domain 1"/>
    <property type="match status" value="1"/>
</dbReference>
<dbReference type="Gene3D" id="1.10.510.10">
    <property type="entry name" value="Transferase(Phosphotransferase) domain 1"/>
    <property type="match status" value="1"/>
</dbReference>
<dbReference type="InterPro" id="IPR050205">
    <property type="entry name" value="CDPK_Ser/Thr_kinases"/>
</dbReference>
<dbReference type="InterPro" id="IPR011992">
    <property type="entry name" value="EF-hand-dom_pair"/>
</dbReference>
<dbReference type="InterPro" id="IPR018247">
    <property type="entry name" value="EF_Hand_1_Ca_BS"/>
</dbReference>
<dbReference type="InterPro" id="IPR002048">
    <property type="entry name" value="EF_hand_dom"/>
</dbReference>
<dbReference type="InterPro" id="IPR011009">
    <property type="entry name" value="Kinase-like_dom_sf"/>
</dbReference>
<dbReference type="InterPro" id="IPR000719">
    <property type="entry name" value="Prot_kinase_dom"/>
</dbReference>
<dbReference type="InterPro" id="IPR017441">
    <property type="entry name" value="Protein_kinase_ATP_BS"/>
</dbReference>
<dbReference type="InterPro" id="IPR008271">
    <property type="entry name" value="Ser/Thr_kinase_AS"/>
</dbReference>
<dbReference type="PANTHER" id="PTHR24349">
    <property type="entry name" value="SERINE/THREONINE-PROTEIN KINASE"/>
    <property type="match status" value="1"/>
</dbReference>
<dbReference type="Pfam" id="PF13499">
    <property type="entry name" value="EF-hand_7"/>
    <property type="match status" value="2"/>
</dbReference>
<dbReference type="Pfam" id="PF00069">
    <property type="entry name" value="Pkinase"/>
    <property type="match status" value="1"/>
</dbReference>
<dbReference type="SMART" id="SM00054">
    <property type="entry name" value="EFh"/>
    <property type="match status" value="4"/>
</dbReference>
<dbReference type="SMART" id="SM00220">
    <property type="entry name" value="S_TKc"/>
    <property type="match status" value="1"/>
</dbReference>
<dbReference type="SUPFAM" id="SSF47473">
    <property type="entry name" value="EF-hand"/>
    <property type="match status" value="1"/>
</dbReference>
<dbReference type="SUPFAM" id="SSF56112">
    <property type="entry name" value="Protein kinase-like (PK-like)"/>
    <property type="match status" value="1"/>
</dbReference>
<dbReference type="PROSITE" id="PS00018">
    <property type="entry name" value="EF_HAND_1"/>
    <property type="match status" value="4"/>
</dbReference>
<dbReference type="PROSITE" id="PS50222">
    <property type="entry name" value="EF_HAND_2"/>
    <property type="match status" value="4"/>
</dbReference>
<dbReference type="PROSITE" id="PS00107">
    <property type="entry name" value="PROTEIN_KINASE_ATP"/>
    <property type="match status" value="1"/>
</dbReference>
<dbReference type="PROSITE" id="PS50011">
    <property type="entry name" value="PROTEIN_KINASE_DOM"/>
    <property type="match status" value="1"/>
</dbReference>
<dbReference type="PROSITE" id="PS00108">
    <property type="entry name" value="PROTEIN_KINASE_ST"/>
    <property type="match status" value="1"/>
</dbReference>
<comment type="function">
    <text evidence="7">May play a role in signal transduction pathways that involve calcium as a second messenger.</text>
</comment>
<comment type="catalytic activity">
    <reaction>
        <text>L-seryl-[protein] + ATP = O-phospho-L-seryl-[protein] + ADP + H(+)</text>
        <dbReference type="Rhea" id="RHEA:17989"/>
        <dbReference type="Rhea" id="RHEA-COMP:9863"/>
        <dbReference type="Rhea" id="RHEA-COMP:11604"/>
        <dbReference type="ChEBI" id="CHEBI:15378"/>
        <dbReference type="ChEBI" id="CHEBI:29999"/>
        <dbReference type="ChEBI" id="CHEBI:30616"/>
        <dbReference type="ChEBI" id="CHEBI:83421"/>
        <dbReference type="ChEBI" id="CHEBI:456216"/>
        <dbReference type="EC" id="2.7.11.1"/>
    </reaction>
</comment>
<comment type="catalytic activity">
    <reaction>
        <text>L-threonyl-[protein] + ATP = O-phospho-L-threonyl-[protein] + ADP + H(+)</text>
        <dbReference type="Rhea" id="RHEA:46608"/>
        <dbReference type="Rhea" id="RHEA-COMP:11060"/>
        <dbReference type="Rhea" id="RHEA-COMP:11605"/>
        <dbReference type="ChEBI" id="CHEBI:15378"/>
        <dbReference type="ChEBI" id="CHEBI:30013"/>
        <dbReference type="ChEBI" id="CHEBI:30616"/>
        <dbReference type="ChEBI" id="CHEBI:61977"/>
        <dbReference type="ChEBI" id="CHEBI:456216"/>
        <dbReference type="EC" id="2.7.11.1"/>
    </reaction>
</comment>
<comment type="activity regulation">
    <text evidence="1">Activated by calcium. Autophosphorylation may play an important role in the regulation of the kinase activity (By similarity).</text>
</comment>
<comment type="subunit">
    <text evidence="6">Interacts weakly with DI19.</text>
</comment>
<comment type="tissue specificity">
    <text evidence="7">Ubiquitously expressed.</text>
</comment>
<comment type="domain">
    <text evidence="1">There are 3 contiguous domains conserved in the CDPK subfamily: a kinase domain, an autoinhibitory (junction) domain and a calmodulin-like domain. The autoinhibitory domain (286-316) inactivates kinase activity under calcium-free conditions (By similarity).</text>
</comment>
<comment type="similarity">
    <text evidence="3">Belongs to the protein kinase superfamily. Ser/Thr protein kinase family. CDPK subfamily.</text>
</comment>
<name>CDPKC_ARATH</name>
<evidence type="ECO:0000250" key="1"/>
<evidence type="ECO:0000250" key="2">
    <source>
        <dbReference type="UniProtKB" id="Q9FKW4"/>
    </source>
</evidence>
<evidence type="ECO:0000255" key="3">
    <source>
        <dbReference type="PROSITE-ProRule" id="PRU00159"/>
    </source>
</evidence>
<evidence type="ECO:0000255" key="4">
    <source>
        <dbReference type="PROSITE-ProRule" id="PRU00448"/>
    </source>
</evidence>
<evidence type="ECO:0000255" key="5">
    <source>
        <dbReference type="PROSITE-ProRule" id="PRU10027"/>
    </source>
</evidence>
<evidence type="ECO:0000269" key="6">
    <source>
    </source>
</evidence>
<evidence type="ECO:0000269" key="7">
    <source>
    </source>
</evidence>
<reference key="1">
    <citation type="journal article" date="1996" name="Plant Mol. Biol.">
        <title>Expression of three members of the calcium-dependent protein kinase gene family in Arabidopsis thaliana.</title>
        <authorList>
            <person name="Hong Y."/>
            <person name="Takano M."/>
            <person name="Liu C.-M."/>
            <person name="Gasch A."/>
            <person name="Chye M.-L."/>
            <person name="Chua N.-H."/>
        </authorList>
    </citation>
    <scope>NUCLEOTIDE SEQUENCE [GENOMIC DNA / MRNA]</scope>
    <scope>FUNCTION</scope>
    <scope>ACTIVITY REGULATION</scope>
    <scope>TISSUE SPECIFICITY</scope>
    <source>
        <strain>cv. Columbia</strain>
    </source>
</reference>
<reference key="2">
    <citation type="journal article" date="2000" name="DNA Res.">
        <title>Structural analysis of Arabidopsis thaliana chromosome 5. X. Sequence features of the regions of 3,076,755 bp covered by sixty P1 and TAC clones.</title>
        <authorList>
            <person name="Sato S."/>
            <person name="Nakamura Y."/>
            <person name="Kaneko T."/>
            <person name="Katoh T."/>
            <person name="Asamizu E."/>
            <person name="Kotani H."/>
            <person name="Tabata S."/>
        </authorList>
    </citation>
    <scope>NUCLEOTIDE SEQUENCE [LARGE SCALE GENOMIC DNA]</scope>
    <source>
        <strain>cv. Columbia</strain>
    </source>
</reference>
<reference key="3">
    <citation type="journal article" date="2017" name="Plant J.">
        <title>Araport11: a complete reannotation of the Arabidopsis thaliana reference genome.</title>
        <authorList>
            <person name="Cheng C.Y."/>
            <person name="Krishnakumar V."/>
            <person name="Chan A.P."/>
            <person name="Thibaud-Nissen F."/>
            <person name="Schobel S."/>
            <person name="Town C.D."/>
        </authorList>
    </citation>
    <scope>GENOME REANNOTATION</scope>
    <source>
        <strain>cv. Columbia</strain>
    </source>
</reference>
<reference key="4">
    <citation type="submission" date="2006-07" db="EMBL/GenBank/DDBJ databases">
        <title>Large-scale analysis of RIKEN Arabidopsis full-length (RAFL) cDNAs.</title>
        <authorList>
            <person name="Totoki Y."/>
            <person name="Seki M."/>
            <person name="Ishida J."/>
            <person name="Nakajima M."/>
            <person name="Enju A."/>
            <person name="Kamiya A."/>
            <person name="Narusaka M."/>
            <person name="Shin-i T."/>
            <person name="Nakagawa M."/>
            <person name="Sakamoto N."/>
            <person name="Oishi K."/>
            <person name="Kohara Y."/>
            <person name="Kobayashi M."/>
            <person name="Toyoda A."/>
            <person name="Sakaki Y."/>
            <person name="Sakurai T."/>
            <person name="Iida K."/>
            <person name="Akiyama K."/>
            <person name="Satou M."/>
            <person name="Toyoda T."/>
            <person name="Konagaya A."/>
            <person name="Carninci P."/>
            <person name="Kawai J."/>
            <person name="Hayashizaki Y."/>
            <person name="Shinozaki K."/>
        </authorList>
    </citation>
    <scope>NUCLEOTIDE SEQUENCE [LARGE SCALE MRNA]</scope>
    <source>
        <strain>cv. Columbia</strain>
    </source>
</reference>
<reference key="5">
    <citation type="submission" date="2006-08" db="EMBL/GenBank/DDBJ databases">
        <title>Arabidopsis ORF clones.</title>
        <authorList>
            <person name="Quinitio C."/>
            <person name="Chen H."/>
            <person name="Kim C.J."/>
            <person name="Shinn P."/>
            <person name="Ecker J.R."/>
        </authorList>
    </citation>
    <scope>NUCLEOTIDE SEQUENCE [MRNA]</scope>
    <source>
        <strain>cv. Columbia</strain>
    </source>
</reference>
<reference key="6">
    <citation type="journal article" date="2001" name="New Phytol.">
        <title>The CDPK superfamily of protein kinases.</title>
        <authorList>
            <person name="Harmon A.C."/>
            <person name="Gribskov M."/>
            <person name="Gubrium E."/>
            <person name="Harper J.F."/>
        </authorList>
    </citation>
    <scope>GENE FAMILY</scope>
    <scope>NOMENCLATURE</scope>
</reference>
<reference key="7">
    <citation type="journal article" date="2002" name="Plant Physiol.">
        <title>Calcium signaling through protein kinases. The Arabidopsis calcium-dependent protein kinase gene family.</title>
        <authorList>
            <person name="Cheng S.-H."/>
            <person name="Willmann M.R."/>
            <person name="Chen H.-C."/>
            <person name="Sheen J."/>
        </authorList>
    </citation>
    <scope>GENE FAMILY</scope>
    <scope>NOMENCLATURE</scope>
</reference>
<reference key="8">
    <citation type="journal article" date="2003" name="Plant Physiol.">
        <title>The Arabidopsis CDPK-SnRK superfamily of protein kinases.</title>
        <authorList>
            <person name="Hrabak E.M."/>
            <person name="Chan C.W.M."/>
            <person name="Gribskov M."/>
            <person name="Harper J.F."/>
            <person name="Choi J.H."/>
            <person name="Halford N."/>
            <person name="Kudla J."/>
            <person name="Luan S."/>
            <person name="Nimmo H.G."/>
            <person name="Sussman M.R."/>
            <person name="Thomas M."/>
            <person name="Walker-Simmons K."/>
            <person name="Zhu J.-K."/>
            <person name="Harmon A.C."/>
        </authorList>
    </citation>
    <scope>GENE FAMILY</scope>
    <scope>NOMENCLATURE</scope>
</reference>
<reference key="9">
    <citation type="journal article" date="2006" name="FEBS Lett.">
        <title>A novel yeast two-hybrid approach to identify CDPK substrates: characterization of the interaction between AtCPK11 and AtDi19, a nuclear zinc finger protein.</title>
        <authorList>
            <person name="Rodriguez Milla M.A."/>
            <person name="Uno Y."/>
            <person name="Chang I.-F."/>
            <person name="Townsend J."/>
            <person name="Maher E.A."/>
            <person name="Quilici D."/>
            <person name="Cushman J.C."/>
        </authorList>
    </citation>
    <scope>INTERACTION WITH DI19</scope>
</reference>
<feature type="chain" id="PRO_0000304514" description="Calcium-dependent protein kinase 12">
    <location>
        <begin position="1"/>
        <end position="490"/>
    </location>
</feature>
<feature type="domain" description="Protein kinase" evidence="3">
    <location>
        <begin position="22"/>
        <end position="280"/>
    </location>
</feature>
<feature type="domain" description="EF-hand 1" evidence="4">
    <location>
        <begin position="323"/>
        <end position="358"/>
    </location>
</feature>
<feature type="domain" description="EF-hand 2" evidence="4">
    <location>
        <begin position="359"/>
        <end position="394"/>
    </location>
</feature>
<feature type="domain" description="EF-hand 3" evidence="4">
    <location>
        <begin position="395"/>
        <end position="430"/>
    </location>
</feature>
<feature type="domain" description="EF-hand 4" evidence="4">
    <location>
        <begin position="434"/>
        <end position="464"/>
    </location>
</feature>
<feature type="region of interest" description="Autoinhibitory domain" evidence="1">
    <location>
        <begin position="286"/>
        <end position="316"/>
    </location>
</feature>
<feature type="active site" description="Proton acceptor" evidence="3 5">
    <location>
        <position position="146"/>
    </location>
</feature>
<feature type="binding site" evidence="3">
    <location>
        <begin position="28"/>
        <end position="36"/>
    </location>
    <ligand>
        <name>ATP</name>
        <dbReference type="ChEBI" id="CHEBI:30616"/>
    </ligand>
</feature>
<feature type="binding site" evidence="3">
    <location>
        <position position="51"/>
    </location>
    <ligand>
        <name>ATP</name>
        <dbReference type="ChEBI" id="CHEBI:30616"/>
    </ligand>
</feature>
<feature type="binding site" evidence="4">
    <location>
        <position position="336"/>
    </location>
    <ligand>
        <name>Ca(2+)</name>
        <dbReference type="ChEBI" id="CHEBI:29108"/>
        <label>1</label>
    </ligand>
</feature>
<feature type="binding site" evidence="4">
    <location>
        <position position="338"/>
    </location>
    <ligand>
        <name>Ca(2+)</name>
        <dbReference type="ChEBI" id="CHEBI:29108"/>
        <label>1</label>
    </ligand>
</feature>
<feature type="binding site" evidence="4">
    <location>
        <position position="340"/>
    </location>
    <ligand>
        <name>Ca(2+)</name>
        <dbReference type="ChEBI" id="CHEBI:29108"/>
        <label>1</label>
    </ligand>
</feature>
<feature type="binding site" evidence="4">
    <location>
        <position position="342"/>
    </location>
    <ligand>
        <name>Ca(2+)</name>
        <dbReference type="ChEBI" id="CHEBI:29108"/>
        <label>1</label>
    </ligand>
</feature>
<feature type="binding site" evidence="4">
    <location>
        <position position="347"/>
    </location>
    <ligand>
        <name>Ca(2+)</name>
        <dbReference type="ChEBI" id="CHEBI:29108"/>
        <label>1</label>
    </ligand>
</feature>
<feature type="binding site" evidence="4">
    <location>
        <position position="372"/>
    </location>
    <ligand>
        <name>Ca(2+)</name>
        <dbReference type="ChEBI" id="CHEBI:29108"/>
        <label>2</label>
    </ligand>
</feature>
<feature type="binding site" evidence="4">
    <location>
        <position position="374"/>
    </location>
    <ligand>
        <name>Ca(2+)</name>
        <dbReference type="ChEBI" id="CHEBI:29108"/>
        <label>2</label>
    </ligand>
</feature>
<feature type="binding site" evidence="4">
    <location>
        <position position="376"/>
    </location>
    <ligand>
        <name>Ca(2+)</name>
        <dbReference type="ChEBI" id="CHEBI:29108"/>
        <label>2</label>
    </ligand>
</feature>
<feature type="binding site" evidence="4">
    <location>
        <position position="378"/>
    </location>
    <ligand>
        <name>Ca(2+)</name>
        <dbReference type="ChEBI" id="CHEBI:29108"/>
        <label>2</label>
    </ligand>
</feature>
<feature type="binding site" evidence="4">
    <location>
        <position position="383"/>
    </location>
    <ligand>
        <name>Ca(2+)</name>
        <dbReference type="ChEBI" id="CHEBI:29108"/>
        <label>2</label>
    </ligand>
</feature>
<feature type="binding site" evidence="4">
    <location>
        <position position="408"/>
    </location>
    <ligand>
        <name>Ca(2+)</name>
        <dbReference type="ChEBI" id="CHEBI:29108"/>
        <label>3</label>
    </ligand>
</feature>
<feature type="binding site" evidence="4">
    <location>
        <position position="410"/>
    </location>
    <ligand>
        <name>Ca(2+)</name>
        <dbReference type="ChEBI" id="CHEBI:29108"/>
        <label>3</label>
    </ligand>
</feature>
<feature type="binding site" evidence="4">
    <location>
        <position position="412"/>
    </location>
    <ligand>
        <name>Ca(2+)</name>
        <dbReference type="ChEBI" id="CHEBI:29108"/>
        <label>3</label>
    </ligand>
</feature>
<feature type="binding site" evidence="4">
    <location>
        <position position="414"/>
    </location>
    <ligand>
        <name>Ca(2+)</name>
        <dbReference type="ChEBI" id="CHEBI:29108"/>
        <label>3</label>
    </ligand>
</feature>
<feature type="binding site" evidence="4">
    <location>
        <position position="419"/>
    </location>
    <ligand>
        <name>Ca(2+)</name>
        <dbReference type="ChEBI" id="CHEBI:29108"/>
        <label>3</label>
    </ligand>
</feature>
<feature type="binding site" evidence="4">
    <location>
        <position position="442"/>
    </location>
    <ligand>
        <name>Ca(2+)</name>
        <dbReference type="ChEBI" id="CHEBI:29108"/>
        <label>4</label>
    </ligand>
</feature>
<feature type="binding site" evidence="4">
    <location>
        <position position="444"/>
    </location>
    <ligand>
        <name>Ca(2+)</name>
        <dbReference type="ChEBI" id="CHEBI:29108"/>
        <label>4</label>
    </ligand>
</feature>
<feature type="binding site" evidence="4">
    <location>
        <position position="446"/>
    </location>
    <ligand>
        <name>Ca(2+)</name>
        <dbReference type="ChEBI" id="CHEBI:29108"/>
        <label>4</label>
    </ligand>
</feature>
<feature type="binding site" evidence="4">
    <location>
        <position position="448"/>
    </location>
    <ligand>
        <name>Ca(2+)</name>
        <dbReference type="ChEBI" id="CHEBI:29108"/>
        <label>4</label>
    </ligand>
</feature>
<feature type="binding site" evidence="4">
    <location>
        <position position="453"/>
    </location>
    <ligand>
        <name>Ca(2+)</name>
        <dbReference type="ChEBI" id="CHEBI:29108"/>
        <label>4</label>
    </ligand>
</feature>
<feature type="modified residue" description="Phosphoserine" evidence="2">
    <location>
        <position position="186"/>
    </location>
</feature>
<sequence length="490" mass="55379">MANKPRTRWVLPYKTKNVEDNYFLGQVLGQGQFGTTFLCTHKQTGQKLACKSIPKRKLLCQEDYDDVLREIQIMHHLSEYPNVVRIESAYEDTKNVHLVMELCEGGELFDRIVKRGHYSEREAAKLIKTIVGVVEACHSLGVVHRDLKPENFLFSSSDEDASLKSTDFGLSVFCTPGEAFSELVGSAYYVAPEVLHKHYGPECDVWSAGVILYILLCGFPPFWAESEIGIFRKILQGKLEFEINPWPSISESAKDLIKKMLESNPKKRLTAHQVLCHPWIVDDKVAPDKPLDCAVVSRLKKFSAMNKLKKMALRVIAERLSEEEIGGLKELFKMIDTDKSGTITFEELKDSMRRVGSELMESEIQELLRAADVDESGTIDYGEFLAATIHLNKLEREENLVAAFSFFDKDASGYITIEELQQAWKEFGINDSNLDEMIKDIDQDNDGQIDYGEFVAMMRKGNGTGGGIGRRTMRNSLNFGTTLPDESMNV</sequence>
<keyword id="KW-0067">ATP-binding</keyword>
<keyword id="KW-0106">Calcium</keyword>
<keyword id="KW-0418">Kinase</keyword>
<keyword id="KW-0479">Metal-binding</keyword>
<keyword id="KW-0547">Nucleotide-binding</keyword>
<keyword id="KW-0597">Phosphoprotein</keyword>
<keyword id="KW-1185">Reference proteome</keyword>
<keyword id="KW-0677">Repeat</keyword>
<keyword id="KW-0723">Serine/threonine-protein kinase</keyword>
<keyword id="KW-0808">Transferase</keyword>
<proteinExistence type="evidence at protein level"/>
<protein>
    <recommendedName>
        <fullName>Calcium-dependent protein kinase 12</fullName>
        <ecNumber>2.7.11.1</ecNumber>
    </recommendedName>
    <alternativeName>
        <fullName>Calcium-dependent protein kinase isoform CDPK9</fullName>
        <shortName>AtCDPK9</shortName>
    </alternativeName>
</protein>
<organism>
    <name type="scientific">Arabidopsis thaliana</name>
    <name type="common">Mouse-ear cress</name>
    <dbReference type="NCBI Taxonomy" id="3702"/>
    <lineage>
        <taxon>Eukaryota</taxon>
        <taxon>Viridiplantae</taxon>
        <taxon>Streptophyta</taxon>
        <taxon>Embryophyta</taxon>
        <taxon>Tracheophyta</taxon>
        <taxon>Spermatophyta</taxon>
        <taxon>Magnoliopsida</taxon>
        <taxon>eudicotyledons</taxon>
        <taxon>Gunneridae</taxon>
        <taxon>Pentapetalae</taxon>
        <taxon>rosids</taxon>
        <taxon>malvids</taxon>
        <taxon>Brassicales</taxon>
        <taxon>Brassicaceae</taxon>
        <taxon>Camelineae</taxon>
        <taxon>Arabidopsis</taxon>
    </lineage>
</organism>
<gene>
    <name type="primary">CPK12</name>
    <name type="synonym">CDPK9</name>
    <name type="ordered locus">At5g23580</name>
    <name type="ORF">MQM1.15</name>
</gene>